<organism>
    <name type="scientific">Salmonella typhi</name>
    <dbReference type="NCBI Taxonomy" id="90370"/>
    <lineage>
        <taxon>Bacteria</taxon>
        <taxon>Pseudomonadati</taxon>
        <taxon>Pseudomonadota</taxon>
        <taxon>Gammaproteobacteria</taxon>
        <taxon>Enterobacterales</taxon>
        <taxon>Enterobacteriaceae</taxon>
        <taxon>Salmonella</taxon>
    </lineage>
</organism>
<feature type="chain" id="PRO_0000065699" description="Vi polysaccharide biosynthesis protein TviD">
    <location>
        <begin position="1"/>
        <end position="831"/>
    </location>
</feature>
<feature type="sequence conflict" description="In Ref. 4; CAA47993." evidence="1" ref="4">
    <original>R</original>
    <variation>S</variation>
    <location>
        <position position="290"/>
    </location>
</feature>
<feature type="sequence conflict" description="In Ref. 1; BAA03194." evidence="1" ref="1">
    <original>T</original>
    <variation>A</variation>
    <location>
        <position position="293"/>
    </location>
</feature>
<dbReference type="EMBL" id="D14156">
    <property type="protein sequence ID" value="BAA03194.1"/>
    <property type="molecule type" value="Genomic_DNA"/>
</dbReference>
<dbReference type="EMBL" id="AL513382">
    <property type="protein sequence ID" value="CAD06779.1"/>
    <property type="molecule type" value="Genomic_DNA"/>
</dbReference>
<dbReference type="EMBL" id="AE014613">
    <property type="protein sequence ID" value="AAO71803.1"/>
    <property type="molecule type" value="Genomic_DNA"/>
</dbReference>
<dbReference type="EMBL" id="X67785">
    <property type="protein sequence ID" value="CAA47993.1"/>
    <property type="molecule type" value="Genomic_DNA"/>
</dbReference>
<dbReference type="PIR" id="D36892">
    <property type="entry name" value="D36892"/>
</dbReference>
<dbReference type="RefSeq" id="NP_458738.1">
    <property type="nucleotide sequence ID" value="NC_003198.1"/>
</dbReference>
<dbReference type="RefSeq" id="WP_010989299.1">
    <property type="nucleotide sequence ID" value="NZ_WSUR01000012.1"/>
</dbReference>
<dbReference type="RefSeq" id="WP_072075061.1">
    <property type="nucleotide sequence ID" value="NZ_PZLS01000017.1"/>
</dbReference>
<dbReference type="STRING" id="220341.gene:17588476"/>
<dbReference type="KEGG" id="stt:t4350"/>
<dbReference type="KEGG" id="sty:STY4659"/>
<dbReference type="PATRIC" id="fig|220341.7.peg.4758"/>
<dbReference type="eggNOG" id="COG0457">
    <property type="taxonomic scope" value="Bacteria"/>
</dbReference>
<dbReference type="HOGENOM" id="CLU_342776_0_0_6"/>
<dbReference type="OMA" id="MYEREDY"/>
<dbReference type="OrthoDB" id="8622636at2"/>
<dbReference type="UniPathway" id="UPA00811"/>
<dbReference type="UniPathway" id="UPA00934"/>
<dbReference type="Proteomes" id="UP000000541">
    <property type="component" value="Chromosome"/>
</dbReference>
<dbReference type="Proteomes" id="UP000002670">
    <property type="component" value="Chromosome"/>
</dbReference>
<dbReference type="GO" id="GO:0045227">
    <property type="term" value="P:capsule polysaccharide biosynthetic process"/>
    <property type="evidence" value="ECO:0007669"/>
    <property type="project" value="UniProtKB-UniPathway"/>
</dbReference>
<dbReference type="Gene3D" id="1.25.40.10">
    <property type="entry name" value="Tetratricopeptide repeat domain"/>
    <property type="match status" value="2"/>
</dbReference>
<dbReference type="InterPro" id="IPR011990">
    <property type="entry name" value="TPR-like_helical_dom_sf"/>
</dbReference>
<dbReference type="NCBIfam" id="NF011727">
    <property type="entry name" value="PRK15180.1"/>
    <property type="match status" value="1"/>
</dbReference>
<dbReference type="SUPFAM" id="SSF48452">
    <property type="entry name" value="TPR-like"/>
    <property type="match status" value="1"/>
</dbReference>
<dbReference type="PROSITE" id="PS51257">
    <property type="entry name" value="PROKAR_LIPOPROTEIN"/>
    <property type="match status" value="1"/>
</dbReference>
<protein>
    <recommendedName>
        <fullName>Vi polysaccharide biosynthesis protein TviD</fullName>
    </recommendedName>
</protein>
<accession>Q04974</accession>
<reference key="1">
    <citation type="journal article" date="1993" name="J. Bacteriol.">
        <title>Complete nucleotide sequence and molecular characterization of ViaB region encoding Vi antigen in Salmonella typhi.</title>
        <authorList>
            <person name="Hashimoto Y."/>
            <person name="Li N."/>
            <person name="Yokoyama H."/>
            <person name="Ezaki T."/>
        </authorList>
    </citation>
    <scope>NUCLEOTIDE SEQUENCE [GENOMIC DNA]</scope>
    <source>
        <strain>GIFU 10007</strain>
    </source>
</reference>
<reference key="2">
    <citation type="journal article" date="2001" name="Nature">
        <title>Complete genome sequence of a multiple drug resistant Salmonella enterica serovar Typhi CT18.</title>
        <authorList>
            <person name="Parkhill J."/>
            <person name="Dougan G."/>
            <person name="James K.D."/>
            <person name="Thomson N.R."/>
            <person name="Pickard D."/>
            <person name="Wain J."/>
            <person name="Churcher C.M."/>
            <person name="Mungall K.L."/>
            <person name="Bentley S.D."/>
            <person name="Holden M.T.G."/>
            <person name="Sebaihia M."/>
            <person name="Baker S."/>
            <person name="Basham D."/>
            <person name="Brooks K."/>
            <person name="Chillingworth T."/>
            <person name="Connerton P."/>
            <person name="Cronin A."/>
            <person name="Davis P."/>
            <person name="Davies R.M."/>
            <person name="Dowd L."/>
            <person name="White N."/>
            <person name="Farrar J."/>
            <person name="Feltwell T."/>
            <person name="Hamlin N."/>
            <person name="Haque A."/>
            <person name="Hien T.T."/>
            <person name="Holroyd S."/>
            <person name="Jagels K."/>
            <person name="Krogh A."/>
            <person name="Larsen T.S."/>
            <person name="Leather S."/>
            <person name="Moule S."/>
            <person name="O'Gaora P."/>
            <person name="Parry C."/>
            <person name="Quail M.A."/>
            <person name="Rutherford K.M."/>
            <person name="Simmonds M."/>
            <person name="Skelton J."/>
            <person name="Stevens K."/>
            <person name="Whitehead S."/>
            <person name="Barrell B.G."/>
        </authorList>
    </citation>
    <scope>NUCLEOTIDE SEQUENCE [LARGE SCALE GENOMIC DNA]</scope>
    <source>
        <strain>CT18</strain>
    </source>
</reference>
<reference key="3">
    <citation type="journal article" date="2003" name="J. Bacteriol.">
        <title>Comparative genomics of Salmonella enterica serovar Typhi strains Ty2 and CT18.</title>
        <authorList>
            <person name="Deng W."/>
            <person name="Liou S.-R."/>
            <person name="Plunkett G. III"/>
            <person name="Mayhew G.F."/>
            <person name="Rose D.J."/>
            <person name="Burland V."/>
            <person name="Kodoyianni V."/>
            <person name="Schwartz D.C."/>
            <person name="Blattner F.R."/>
        </authorList>
    </citation>
    <scope>NUCLEOTIDE SEQUENCE [LARGE SCALE GENOMIC DNA]</scope>
    <source>
        <strain>ATCC 700931 / Ty2</strain>
    </source>
</reference>
<reference key="4">
    <citation type="journal article" date="1993" name="Res. Microbiol.">
        <title>Identification of six open reading frames in the Salmonella enterica subsp. enterica ser. Typhi viaB locus involved in Vi antigen production.</title>
        <authorList>
            <person name="Waxin H."/>
            <person name="Virlogeux I."/>
            <person name="Kolyva S."/>
            <person name="Popoff M.Y."/>
        </authorList>
    </citation>
    <scope>NUCLEOTIDE SEQUENCE [GENOMIC DNA] OF 101-831</scope>
    <source>
        <strain>ATCC 700931 / Ty2</strain>
    </source>
</reference>
<evidence type="ECO:0000305" key="1"/>
<gene>
    <name type="primary">tviD</name>
    <name type="ordered locus">STY4659</name>
    <name type="ordered locus">t4350</name>
</gene>
<comment type="function">
    <text>May be required for maturation of the Vi polysaccharide.</text>
</comment>
<comment type="pathway">
    <text>Glycan metabolism; Vi-antigen biosynthesis.</text>
</comment>
<comment type="pathway">
    <text>Capsule biogenesis; capsule polysaccharide biosynthesis.</text>
</comment>
<sequence>MNLMKSSGMFTLTAIGSCRIVSPVKRAQPYFNFQANFKRIYGFTHTSSEALQQIRFILGLIDIPEKVRPFIFRPNVNYSNTDVHSRSDFYIIEISSQKKIMAYGFCLQINYLTRHFYEFFSQTERACMYWSLATQGNRHKLLAYLKDDPCFAGMSEDDRALLSNINVEQMDEHAIEQDMMEIVQLLGRDRVMFMTHVDAVTRAGTVILSRSRLIKNVDTIAARMDIPCVNPTNLMEKWGQKRALEKNGDDLTHYTDMFGDAIVAAIFKGVINNTNHHLDEGRQEKQDQIREITLSITKQLADGDIIAASQQLFAALRNQQQDPVLIQLRSVIFSHLGYYEQAYQDISDVEKIIGTTDSTLRCRLRSLHGLARWREALSTAEMMLSNEIEDEEVLTVAAGSADALQLFDKSYHYWKRVLLLNPETQSGWVNFLSSTQYFNDGNAFSEAFHAGIQSQRLNDTFMETALSLAIKFSDELIFMHALEQLLRHESEFALTVLSTIHDTGLVIRTAFCIKNMSYHQALRTSYKDKIHDVFEAWNNTALSLHSVDDFVSLSTSLAYSYSAFMVYPHSRISRFNNEVKMAWRDKLREMYEREDYENILAGAKIVWPLLKFDPVGTVYCARTLVNLGAWKDACTLAHMTLIRNSNITSLQSIMLRSIRHINNIPFLIDLIANVMSITLSFQNASMNKLFEKECRNVATRALKYVRQKKTEGRLDEALSVLISLKRIEPDVSRLMREYKQIIRLFNESRKDGGSTITSYEHLDYAKKLLVFDSENAYALKYAALNAMHLRDYTQALQYWQRLEKVNGPTEPVTRQISTCITALQKNTSGKS</sequence>
<name>TVID_SALTI</name>
<proteinExistence type="predicted"/>